<accession>P01283</accession>
<accession>Q9QUN1</accession>
<dbReference type="EMBL" id="X02341">
    <property type="protein sequence ID" value="CAA26200.1"/>
    <property type="molecule type" value="mRNA"/>
</dbReference>
<dbReference type="PIR" id="A60053">
    <property type="entry name" value="VRRT"/>
</dbReference>
<dbReference type="RefSeq" id="NP_446443.1">
    <property type="nucleotide sequence ID" value="NM_053991.1"/>
</dbReference>
<dbReference type="BMRB" id="P01283"/>
<dbReference type="SMR" id="P01283"/>
<dbReference type="FunCoup" id="P01283">
    <property type="interactions" value="66"/>
</dbReference>
<dbReference type="STRING" id="10116.ENSRNOP00000075997"/>
<dbReference type="BindingDB" id="P01283"/>
<dbReference type="GlyCosmos" id="P01283">
    <property type="glycosylation" value="1 site, No reported glycans"/>
</dbReference>
<dbReference type="GlyGen" id="P01283">
    <property type="glycosylation" value="1 site"/>
</dbReference>
<dbReference type="iPTMnet" id="P01283"/>
<dbReference type="PhosphoSitePlus" id="P01283"/>
<dbReference type="PaxDb" id="10116-ENSRNOP00000025477"/>
<dbReference type="ABCD" id="P01283">
    <property type="antibodies" value="1 sequenced antibody"/>
</dbReference>
<dbReference type="Ensembl" id="ENSRNOT00000025477.7">
    <property type="protein sequence ID" value="ENSRNOP00000025477.6"/>
    <property type="gene ID" value="ENSRNOG00000018808.8"/>
</dbReference>
<dbReference type="GeneID" id="117064"/>
<dbReference type="KEGG" id="rno:117064"/>
<dbReference type="UCSC" id="RGD:621647">
    <property type="organism name" value="rat"/>
</dbReference>
<dbReference type="AGR" id="RGD:621647"/>
<dbReference type="CTD" id="7432"/>
<dbReference type="RGD" id="621647">
    <property type="gene designation" value="Vip"/>
</dbReference>
<dbReference type="eggNOG" id="ENOG502QVTA">
    <property type="taxonomic scope" value="Eukaryota"/>
</dbReference>
<dbReference type="GeneTree" id="ENSGT00950000183154"/>
<dbReference type="HOGENOM" id="CLU_133877_1_0_1"/>
<dbReference type="InParanoid" id="P01283"/>
<dbReference type="OrthoDB" id="59123at9989"/>
<dbReference type="PhylomeDB" id="P01283"/>
<dbReference type="Reactome" id="R-RNO-420092">
    <property type="pathway name" value="Glucagon-type ligand receptors"/>
</dbReference>
<dbReference type="PRO" id="PR:P01283"/>
<dbReference type="Proteomes" id="UP000002494">
    <property type="component" value="Chromosome 1"/>
</dbReference>
<dbReference type="Bgee" id="ENSRNOG00000018808">
    <property type="expression patterns" value="Expressed in jejunum and 8 other cell types or tissues"/>
</dbReference>
<dbReference type="ExpressionAtlas" id="P01283">
    <property type="expression patterns" value="baseline and differential"/>
</dbReference>
<dbReference type="GO" id="GO:0005615">
    <property type="term" value="C:extracellular space"/>
    <property type="evidence" value="ECO:0000266"/>
    <property type="project" value="RGD"/>
</dbReference>
<dbReference type="GO" id="GO:0043005">
    <property type="term" value="C:neuron projection"/>
    <property type="evidence" value="ECO:0000318"/>
    <property type="project" value="GO_Central"/>
</dbReference>
<dbReference type="GO" id="GO:0043025">
    <property type="term" value="C:neuronal cell body"/>
    <property type="evidence" value="ECO:0000314"/>
    <property type="project" value="RGD"/>
</dbReference>
<dbReference type="GO" id="GO:0005179">
    <property type="term" value="F:hormone activity"/>
    <property type="evidence" value="ECO:0000314"/>
    <property type="project" value="BHF-UCL"/>
</dbReference>
<dbReference type="GO" id="GO:0005184">
    <property type="term" value="F:neuropeptide hormone activity"/>
    <property type="evidence" value="ECO:0000250"/>
    <property type="project" value="UniProtKB"/>
</dbReference>
<dbReference type="GO" id="GO:0051428">
    <property type="term" value="F:peptide hormone receptor binding"/>
    <property type="evidence" value="ECO:0000266"/>
    <property type="project" value="RGD"/>
</dbReference>
<dbReference type="GO" id="GO:0005102">
    <property type="term" value="F:signaling receptor binding"/>
    <property type="evidence" value="ECO:0000314"/>
    <property type="project" value="RGD"/>
</dbReference>
<dbReference type="GO" id="GO:0031891">
    <property type="term" value="F:type 1 vasoactive intestinal polypeptide receptor binding"/>
    <property type="evidence" value="ECO:0000250"/>
    <property type="project" value="UniProtKB"/>
</dbReference>
<dbReference type="GO" id="GO:0031892">
    <property type="term" value="F:type 2 vasoactive intestinal polypeptide receptor binding"/>
    <property type="evidence" value="ECO:0000266"/>
    <property type="project" value="RGD"/>
</dbReference>
<dbReference type="GO" id="GO:0007189">
    <property type="term" value="P:adenylate cyclase-activating G protein-coupled receptor signaling pathway"/>
    <property type="evidence" value="ECO:0000314"/>
    <property type="project" value="BHF-UCL"/>
</dbReference>
<dbReference type="GO" id="GO:0048242">
    <property type="term" value="P:epinephrine secretion"/>
    <property type="evidence" value="ECO:0000318"/>
    <property type="project" value="GO_Central"/>
</dbReference>
<dbReference type="GO" id="GO:0007611">
    <property type="term" value="P:learning or memory"/>
    <property type="evidence" value="ECO:0000314"/>
    <property type="project" value="RGD"/>
</dbReference>
<dbReference type="GO" id="GO:0048255">
    <property type="term" value="P:mRNA stabilization"/>
    <property type="evidence" value="ECO:0000250"/>
    <property type="project" value="AgBase"/>
</dbReference>
<dbReference type="GO" id="GO:0043066">
    <property type="term" value="P:negative regulation of apoptotic process"/>
    <property type="evidence" value="ECO:0000314"/>
    <property type="project" value="RGD"/>
</dbReference>
<dbReference type="GO" id="GO:0043267">
    <property type="term" value="P:negative regulation of potassium ion transport"/>
    <property type="evidence" value="ECO:0000314"/>
    <property type="project" value="RGD"/>
</dbReference>
<dbReference type="GO" id="GO:0048662">
    <property type="term" value="P:negative regulation of smooth muscle cell proliferation"/>
    <property type="evidence" value="ECO:0000315"/>
    <property type="project" value="RGD"/>
</dbReference>
<dbReference type="GO" id="GO:0001938">
    <property type="term" value="P:positive regulation of endothelial cell proliferation"/>
    <property type="evidence" value="ECO:0000314"/>
    <property type="project" value="RGD"/>
</dbReference>
<dbReference type="GO" id="GO:0060406">
    <property type="term" value="P:positive regulation of penile erection"/>
    <property type="evidence" value="ECO:0000314"/>
    <property type="project" value="RGD"/>
</dbReference>
<dbReference type="GO" id="GO:0045732">
    <property type="term" value="P:positive regulation of protein catabolic process"/>
    <property type="evidence" value="ECO:0000314"/>
    <property type="project" value="BHF-UCL"/>
</dbReference>
<dbReference type="GO" id="GO:0070459">
    <property type="term" value="P:prolactin secretion"/>
    <property type="evidence" value="ECO:0000250"/>
    <property type="project" value="AgBase"/>
</dbReference>
<dbReference type="GO" id="GO:0032880">
    <property type="term" value="P:regulation of protein localization"/>
    <property type="evidence" value="ECO:0000314"/>
    <property type="project" value="BHF-UCL"/>
</dbReference>
<dbReference type="GO" id="GO:0009966">
    <property type="term" value="P:regulation of signal transduction"/>
    <property type="evidence" value="ECO:0000266"/>
    <property type="project" value="RGD"/>
</dbReference>
<dbReference type="Gene3D" id="6.10.250.590">
    <property type="match status" value="2"/>
</dbReference>
<dbReference type="InterPro" id="IPR000532">
    <property type="entry name" value="Glucagon_GIP_secretin_VIP"/>
</dbReference>
<dbReference type="InterPro" id="IPR046963">
    <property type="entry name" value="VIP/GHRH-like"/>
</dbReference>
<dbReference type="PANTHER" id="PTHR11213">
    <property type="entry name" value="GLUCAGON-FAMILY NEUROPEPTIDE"/>
    <property type="match status" value="1"/>
</dbReference>
<dbReference type="PANTHER" id="PTHR11213:SF5">
    <property type="entry name" value="VIP PEPTIDES"/>
    <property type="match status" value="1"/>
</dbReference>
<dbReference type="Pfam" id="PF00123">
    <property type="entry name" value="Hormone_2"/>
    <property type="match status" value="2"/>
</dbReference>
<dbReference type="SMART" id="SM00070">
    <property type="entry name" value="GLUCA"/>
    <property type="match status" value="2"/>
</dbReference>
<dbReference type="PROSITE" id="PS00260">
    <property type="entry name" value="GLUCAGON"/>
    <property type="match status" value="2"/>
</dbReference>
<comment type="function">
    <molecule>Vasoactive intestinal peptide</molecule>
    <text evidence="2">VIP is a neuropeptide involved in a diverse array of physiological processes through activating the PACAP subfamily of class B1 G protein-coupled receptors: VIP receptor 1 (VPR1) and VIP receptor 2 (VPR2). Abundantly expressed throughout the CNS and peripheral nervous systems where they primarily exert neuroprotective and immune modulatory roles (By similarity). Also causes vasodilation, lowers arterial blood pressure, stimulates myocardial contractility, increases glycogenolysis and relaxes the smooth muscle of trachea, stomach and gall bladder (By similarity).</text>
</comment>
<comment type="function">
    <text evidence="2">PHM-27 and PHV-42 are two bioactive forms from proteolysis of the same precursor protein, that cause vasodilation. PHM-27 is a potent agonist of the calcitonin receptor CALCR, with similar efficacy as calcitonin.</text>
</comment>
<comment type="subcellular location">
    <subcellularLocation>
        <location>Secreted</location>
    </subcellularLocation>
</comment>
<comment type="similarity">
    <text evidence="6">Belongs to the glucagon family.</text>
</comment>
<proteinExistence type="evidence at protein level"/>
<gene>
    <name type="primary">Vip</name>
</gene>
<sequence>MESRSKPQFLAILTLFSVLFSQSLAWPLYGPPSSVRLDDRLQFEGAGDPDQVSLKADSDILQNALAENDTPYYDVSRNARHADGVFTSDYSRLLGQISAKKYLESLIGKRISSSISEDPVPVKRHSDAVFTDNYTRLRKQMAVKKYLNSILNGKRSSEGDSPDFLEELEK</sequence>
<keyword id="KW-0027">Amidation</keyword>
<keyword id="KW-0165">Cleavage on pair of basic residues</keyword>
<keyword id="KW-0903">Direct protein sequencing</keyword>
<keyword id="KW-0325">Glycoprotein</keyword>
<keyword id="KW-0372">Hormone</keyword>
<keyword id="KW-0597">Phosphoprotein</keyword>
<keyword id="KW-1185">Reference proteome</keyword>
<keyword id="KW-0964">Secreted</keyword>
<keyword id="KW-0732">Signal</keyword>
<organism>
    <name type="scientific">Rattus norvegicus</name>
    <name type="common">Rat</name>
    <dbReference type="NCBI Taxonomy" id="10116"/>
    <lineage>
        <taxon>Eukaryota</taxon>
        <taxon>Metazoa</taxon>
        <taxon>Chordata</taxon>
        <taxon>Craniata</taxon>
        <taxon>Vertebrata</taxon>
        <taxon>Euteleostomi</taxon>
        <taxon>Mammalia</taxon>
        <taxon>Eutheria</taxon>
        <taxon>Euarchontoglires</taxon>
        <taxon>Glires</taxon>
        <taxon>Rodentia</taxon>
        <taxon>Myomorpha</taxon>
        <taxon>Muroidea</taxon>
        <taxon>Muridae</taxon>
        <taxon>Murinae</taxon>
        <taxon>Rattus</taxon>
    </lineage>
</organism>
<protein>
    <recommendedName>
        <fullName>VIP peptides</fullName>
    </recommendedName>
    <component>
        <recommendedName>
            <fullName>Intestinal peptide PHV-42</fullName>
        </recommendedName>
    </component>
    <component>
        <recommendedName>
            <fullName>Intestinal peptide PHI-27</fullName>
        </recommendedName>
        <alternativeName>
            <fullName>Peptide histidine isoleucinamide 27</fullName>
        </alternativeName>
    </component>
    <component>
        <recommendedName>
            <fullName>Vasoactive intestinal peptide</fullName>
            <shortName>VIP</shortName>
        </recommendedName>
        <alternativeName>
            <fullName>Vasoactive intestinal polypeptide</fullName>
        </alternativeName>
    </component>
</protein>
<evidence type="ECO:0000250" key="1"/>
<evidence type="ECO:0000250" key="2">
    <source>
        <dbReference type="UniProtKB" id="P01282"/>
    </source>
</evidence>
<evidence type="ECO:0000255" key="3"/>
<evidence type="ECO:0000269" key="4">
    <source>
    </source>
</evidence>
<evidence type="ECO:0000269" key="5">
    <source>
    </source>
</evidence>
<evidence type="ECO:0000305" key="6"/>
<evidence type="ECO:0007744" key="7">
    <source>
    </source>
</evidence>
<reference key="1">
    <citation type="journal article" date="1990" name="Brain Res. Mol. Brain Res.">
        <title>The complete structure of the rat VIP gene.</title>
        <authorList>
            <person name="Giladi E."/>
            <person name="Shani Y."/>
            <person name="Gozes I."/>
        </authorList>
    </citation>
    <scope>NUCLEOTIDE SEQUENCE [GENOMIC DNA]</scope>
</reference>
<reference key="2">
    <citation type="journal article" date="1985" name="FEBS Lett.">
        <title>Nucleotide sequence divergence and functional constraint in VIP precursor mRNA evolution between human and rat.</title>
        <authorList>
            <person name="Nishizawa M."/>
            <person name="Hayakawa Y."/>
            <person name="Yanaihara N."/>
            <person name="Okamoto H."/>
        </authorList>
    </citation>
    <scope>NUCLEOTIDE SEQUENCE [MRNA] OF 9-170</scope>
    <scope>AMIDATION AT ILE-107 AND ASN-152</scope>
    <source>
        <tissue>Brain cortex</tissue>
    </source>
</reference>
<reference key="3">
    <citation type="journal article" date="1991" name="Brain Res. Mol. Brain Res.">
        <title>Characterization of the gene and messages for vasoactive intestinal polypeptide (VIP) in rat and mouse.</title>
        <authorList>
            <person name="Lamperti E.D."/>
            <person name="Rosen K.M."/>
            <person name="Villa-Komaroff L."/>
        </authorList>
    </citation>
    <scope>NUCLEOTIDE SEQUENCE [MRNA] OF 78-155</scope>
</reference>
<reference key="4">
    <citation type="journal article" date="1988" name="J. Biol. Chem.">
        <title>Structurally distinctive vasoactive intestinal peptides from rat basophilic leukemia cells.</title>
        <authorList>
            <person name="Goetzl E.J."/>
            <person name="Sreedharan S.P."/>
            <person name="Turck C.W."/>
        </authorList>
    </citation>
    <scope>PROTEIN SEQUENCE OF 134-152</scope>
    <scope>AMIDATION AT ASN-152</scope>
</reference>
<reference key="5">
    <citation type="journal article" date="1993" name="Cell. Immunol.">
        <title>Variants of vasoactive intestinal peptide in mouse mast cells and rat basophilic leukemia cells.</title>
        <authorList>
            <person name="Wershil B.K."/>
            <person name="Turck C.W."/>
            <person name="Sreedharan S.P."/>
            <person name="Yang J."/>
            <person name="An S."/>
            <person name="Galli S.J."/>
            <person name="Goetzl E.J."/>
        </authorList>
    </citation>
    <scope>PROTEIN SEQUENCE OF 134-152</scope>
</reference>
<reference key="6">
    <citation type="journal article" date="2012" name="Nat. Commun.">
        <title>Quantitative maps of protein phosphorylation sites across 14 different rat organs and tissues.</title>
        <authorList>
            <person name="Lundby A."/>
            <person name="Secher A."/>
            <person name="Lage K."/>
            <person name="Nordsborg N.B."/>
            <person name="Dmytriyev A."/>
            <person name="Lundby C."/>
            <person name="Olsen J.V."/>
        </authorList>
    </citation>
    <scope>PHOSPHORYLATION [LARGE SCALE ANALYSIS] AT SER-76</scope>
    <scope>IDENTIFICATION BY MASS SPECTROMETRY [LARGE SCALE ANALYSIS]</scope>
</reference>
<name>VIP_RAT</name>
<feature type="signal peptide">
    <location>
        <begin position="1"/>
        <end position="21"/>
    </location>
</feature>
<feature type="propeptide" id="PRO_0000011471">
    <location>
        <begin position="22"/>
        <end position="79"/>
    </location>
</feature>
<feature type="peptide" id="PRO_0000011472" description="Intestinal peptide PHV-42" evidence="1">
    <location>
        <begin position="81"/>
        <end position="122"/>
    </location>
</feature>
<feature type="peptide" id="PRO_0000011473" description="Intestinal peptide PHI-27">
    <location>
        <begin position="81"/>
        <end position="107"/>
    </location>
</feature>
<feature type="peptide" id="PRO_0000011474" description="Vasoactive intestinal peptide">
    <location>
        <begin position="125"/>
        <end position="152"/>
    </location>
</feature>
<feature type="propeptide" id="PRO_0000011475">
    <location>
        <begin position="156"/>
        <end position="170"/>
    </location>
</feature>
<feature type="modified residue" description="Phosphoserine" evidence="7">
    <location>
        <position position="76"/>
    </location>
</feature>
<feature type="modified residue" description="Isoleucine amide" evidence="5">
    <location>
        <position position="107"/>
    </location>
</feature>
<feature type="modified residue" description="Asparagine amide" evidence="4 5">
    <location>
        <position position="152"/>
    </location>
</feature>
<feature type="glycosylation site" description="N-linked (GlcNAc...) asparagine" evidence="3">
    <location>
        <position position="133"/>
    </location>
</feature>